<comment type="function">
    <text evidence="1">Forms part of the ribosomal stalk, playing a central role in the interaction of the ribosome with GTP-bound translation factors.</text>
</comment>
<comment type="subunit">
    <text evidence="1">Part of the ribosomal stalk of the 50S ribosomal subunit. The N-terminus interacts with L11 and the large rRNA to form the base of the stalk. The C-terminus forms an elongated spine to which L12 dimers bind in a sequential fashion forming a multimeric L10(L12)X complex.</text>
</comment>
<comment type="similarity">
    <text evidence="1">Belongs to the universal ribosomal protein uL10 family.</text>
</comment>
<feature type="chain" id="PRO_1000195545" description="Large ribosomal subunit protein uL10">
    <location>
        <begin position="1"/>
        <end position="165"/>
    </location>
</feature>
<feature type="modified residue" description="N6-acetyllysine" evidence="1">
    <location>
        <position position="37"/>
    </location>
</feature>
<feature type="modified residue" description="N6-acetyllysine" evidence="1">
    <location>
        <position position="105"/>
    </location>
</feature>
<proteinExistence type="inferred from homology"/>
<name>RL10_ECO55</name>
<keyword id="KW-0007">Acetylation</keyword>
<keyword id="KW-1185">Reference proteome</keyword>
<keyword id="KW-0687">Ribonucleoprotein</keyword>
<keyword id="KW-0689">Ribosomal protein</keyword>
<keyword id="KW-0694">RNA-binding</keyword>
<keyword id="KW-0699">rRNA-binding</keyword>
<reference key="1">
    <citation type="journal article" date="2009" name="PLoS Genet.">
        <title>Organised genome dynamics in the Escherichia coli species results in highly diverse adaptive paths.</title>
        <authorList>
            <person name="Touchon M."/>
            <person name="Hoede C."/>
            <person name="Tenaillon O."/>
            <person name="Barbe V."/>
            <person name="Baeriswyl S."/>
            <person name="Bidet P."/>
            <person name="Bingen E."/>
            <person name="Bonacorsi S."/>
            <person name="Bouchier C."/>
            <person name="Bouvet O."/>
            <person name="Calteau A."/>
            <person name="Chiapello H."/>
            <person name="Clermont O."/>
            <person name="Cruveiller S."/>
            <person name="Danchin A."/>
            <person name="Diard M."/>
            <person name="Dossat C."/>
            <person name="Karoui M.E."/>
            <person name="Frapy E."/>
            <person name="Garry L."/>
            <person name="Ghigo J.M."/>
            <person name="Gilles A.M."/>
            <person name="Johnson J."/>
            <person name="Le Bouguenec C."/>
            <person name="Lescat M."/>
            <person name="Mangenot S."/>
            <person name="Martinez-Jehanne V."/>
            <person name="Matic I."/>
            <person name="Nassif X."/>
            <person name="Oztas S."/>
            <person name="Petit M.A."/>
            <person name="Pichon C."/>
            <person name="Rouy Z."/>
            <person name="Ruf C.S."/>
            <person name="Schneider D."/>
            <person name="Tourret J."/>
            <person name="Vacherie B."/>
            <person name="Vallenet D."/>
            <person name="Medigue C."/>
            <person name="Rocha E.P.C."/>
            <person name="Denamur E."/>
        </authorList>
    </citation>
    <scope>NUCLEOTIDE SEQUENCE [LARGE SCALE GENOMIC DNA]</scope>
    <source>
        <strain>55989 / EAEC</strain>
    </source>
</reference>
<gene>
    <name evidence="1" type="primary">rplJ</name>
    <name type="ordered locus">EC55989_4469</name>
</gene>
<organism>
    <name type="scientific">Escherichia coli (strain 55989 / EAEC)</name>
    <dbReference type="NCBI Taxonomy" id="585055"/>
    <lineage>
        <taxon>Bacteria</taxon>
        <taxon>Pseudomonadati</taxon>
        <taxon>Pseudomonadota</taxon>
        <taxon>Gammaproteobacteria</taxon>
        <taxon>Enterobacterales</taxon>
        <taxon>Enterobacteriaceae</taxon>
        <taxon>Escherichia</taxon>
    </lineage>
</organism>
<accession>B7LA78</accession>
<evidence type="ECO:0000255" key="1">
    <source>
        <dbReference type="HAMAP-Rule" id="MF_00362"/>
    </source>
</evidence>
<evidence type="ECO:0000305" key="2"/>
<protein>
    <recommendedName>
        <fullName evidence="1">Large ribosomal subunit protein uL10</fullName>
    </recommendedName>
    <alternativeName>
        <fullName evidence="2">50S ribosomal protein L10</fullName>
    </alternativeName>
</protein>
<dbReference type="EMBL" id="CU928145">
    <property type="protein sequence ID" value="CAV01224.1"/>
    <property type="molecule type" value="Genomic_DNA"/>
</dbReference>
<dbReference type="RefSeq" id="WP_001207201.1">
    <property type="nucleotide sequence ID" value="NZ_CP028304.1"/>
</dbReference>
<dbReference type="SMR" id="B7LA78"/>
<dbReference type="GeneID" id="93777909"/>
<dbReference type="KEGG" id="eck:EC55989_4469"/>
<dbReference type="HOGENOM" id="CLU_092227_0_2_6"/>
<dbReference type="Proteomes" id="UP000000746">
    <property type="component" value="Chromosome"/>
</dbReference>
<dbReference type="GO" id="GO:0015934">
    <property type="term" value="C:large ribosomal subunit"/>
    <property type="evidence" value="ECO:0007669"/>
    <property type="project" value="InterPro"/>
</dbReference>
<dbReference type="GO" id="GO:0070180">
    <property type="term" value="F:large ribosomal subunit rRNA binding"/>
    <property type="evidence" value="ECO:0007669"/>
    <property type="project" value="UniProtKB-UniRule"/>
</dbReference>
<dbReference type="GO" id="GO:0003735">
    <property type="term" value="F:structural constituent of ribosome"/>
    <property type="evidence" value="ECO:0007669"/>
    <property type="project" value="InterPro"/>
</dbReference>
<dbReference type="GO" id="GO:0006412">
    <property type="term" value="P:translation"/>
    <property type="evidence" value="ECO:0007669"/>
    <property type="project" value="UniProtKB-UniRule"/>
</dbReference>
<dbReference type="CDD" id="cd05797">
    <property type="entry name" value="Ribosomal_L10"/>
    <property type="match status" value="1"/>
</dbReference>
<dbReference type="FunFam" id="3.30.70.1730:FF:000001">
    <property type="entry name" value="50S ribosomal protein L10"/>
    <property type="match status" value="1"/>
</dbReference>
<dbReference type="Gene3D" id="3.30.70.1730">
    <property type="match status" value="1"/>
</dbReference>
<dbReference type="Gene3D" id="6.10.250.2350">
    <property type="match status" value="1"/>
</dbReference>
<dbReference type="HAMAP" id="MF_00362">
    <property type="entry name" value="Ribosomal_uL10"/>
    <property type="match status" value="1"/>
</dbReference>
<dbReference type="InterPro" id="IPR001790">
    <property type="entry name" value="Ribosomal_uL10"/>
</dbReference>
<dbReference type="InterPro" id="IPR043141">
    <property type="entry name" value="Ribosomal_uL10-like_sf"/>
</dbReference>
<dbReference type="InterPro" id="IPR022973">
    <property type="entry name" value="Ribosomal_uL10_bac"/>
</dbReference>
<dbReference type="InterPro" id="IPR047865">
    <property type="entry name" value="Ribosomal_uL10_bac_type"/>
</dbReference>
<dbReference type="InterPro" id="IPR002363">
    <property type="entry name" value="Ribosomal_uL10_CS_bac"/>
</dbReference>
<dbReference type="NCBIfam" id="NF000955">
    <property type="entry name" value="PRK00099.1-1"/>
    <property type="match status" value="1"/>
</dbReference>
<dbReference type="PANTHER" id="PTHR11560">
    <property type="entry name" value="39S RIBOSOMAL PROTEIN L10, MITOCHONDRIAL"/>
    <property type="match status" value="1"/>
</dbReference>
<dbReference type="Pfam" id="PF00466">
    <property type="entry name" value="Ribosomal_L10"/>
    <property type="match status" value="1"/>
</dbReference>
<dbReference type="SUPFAM" id="SSF160369">
    <property type="entry name" value="Ribosomal protein L10-like"/>
    <property type="match status" value="1"/>
</dbReference>
<dbReference type="PROSITE" id="PS01109">
    <property type="entry name" value="RIBOSOMAL_L10"/>
    <property type="match status" value="1"/>
</dbReference>
<sequence length="165" mass="17712">MALNLQDKQAIVAEVSEVAKGALSAVVADSRGVTVDKMTELRKAGREAGVYMRVVRNTLLRRAVEGTPFECLKDAFVGPTLIAYSMEHPGAAARLFKEFAKANAKFEVKAAAFEGELIPASQIDRLATLPTYEEAIARLMATMKEASAGKLVRTLAAVRDAKEAA</sequence>